<feature type="chain" id="PRO_0000098036" description="Urease subunit gamma">
    <location>
        <begin position="1"/>
        <end position="100"/>
    </location>
</feature>
<protein>
    <recommendedName>
        <fullName evidence="1">Urease subunit gamma</fullName>
        <ecNumber evidence="1">3.5.1.5</ecNumber>
    </recommendedName>
    <alternativeName>
        <fullName evidence="1">Urea amidohydrolase subunit gamma</fullName>
    </alternativeName>
</protein>
<name>URE3_RHOPA</name>
<reference key="1">
    <citation type="journal article" date="2004" name="Nat. Biotechnol.">
        <title>Complete genome sequence of the metabolically versatile photosynthetic bacterium Rhodopseudomonas palustris.</title>
        <authorList>
            <person name="Larimer F.W."/>
            <person name="Chain P."/>
            <person name="Hauser L."/>
            <person name="Lamerdin J.E."/>
            <person name="Malfatti S."/>
            <person name="Do L."/>
            <person name="Land M.L."/>
            <person name="Pelletier D.A."/>
            <person name="Beatty J.T."/>
            <person name="Lang A.S."/>
            <person name="Tabita F.R."/>
            <person name="Gibson J.L."/>
            <person name="Hanson T.E."/>
            <person name="Bobst C."/>
            <person name="Torres y Torres J.L."/>
            <person name="Peres C."/>
            <person name="Harrison F.H."/>
            <person name="Gibson J."/>
            <person name="Harwood C.S."/>
        </authorList>
    </citation>
    <scope>NUCLEOTIDE SEQUENCE [LARGE SCALE GENOMIC DNA]</scope>
    <source>
        <strain>ATCC BAA-98 / CGA009</strain>
    </source>
</reference>
<comment type="catalytic activity">
    <reaction evidence="1">
        <text>urea + 2 H2O + H(+) = hydrogencarbonate + 2 NH4(+)</text>
        <dbReference type="Rhea" id="RHEA:20557"/>
        <dbReference type="ChEBI" id="CHEBI:15377"/>
        <dbReference type="ChEBI" id="CHEBI:15378"/>
        <dbReference type="ChEBI" id="CHEBI:16199"/>
        <dbReference type="ChEBI" id="CHEBI:17544"/>
        <dbReference type="ChEBI" id="CHEBI:28938"/>
        <dbReference type="EC" id="3.5.1.5"/>
    </reaction>
</comment>
<comment type="pathway">
    <text evidence="1">Nitrogen metabolism; urea degradation; CO(2) and NH(3) from urea (urease route): step 1/1.</text>
</comment>
<comment type="subunit">
    <text evidence="1">Heterotrimer of UreA (gamma), UreB (beta) and UreC (alpha) subunits. Three heterotrimers associate to form the active enzyme.</text>
</comment>
<comment type="subcellular location">
    <subcellularLocation>
        <location evidence="1">Cytoplasm</location>
    </subcellularLocation>
</comment>
<comment type="similarity">
    <text evidence="1">Belongs to the urease gamma subunit family.</text>
</comment>
<accession>Q6N3N0</accession>
<dbReference type="EC" id="3.5.1.5" evidence="1"/>
<dbReference type="EMBL" id="BX572604">
    <property type="protein sequence ID" value="CAE29104.1"/>
    <property type="molecule type" value="Genomic_DNA"/>
</dbReference>
<dbReference type="RefSeq" id="WP_011159202.1">
    <property type="nucleotide sequence ID" value="NZ_CP116810.1"/>
</dbReference>
<dbReference type="SMR" id="Q6N3N0"/>
<dbReference type="STRING" id="258594.RPA3663"/>
<dbReference type="eggNOG" id="COG0831">
    <property type="taxonomic scope" value="Bacteria"/>
</dbReference>
<dbReference type="HOGENOM" id="CLU_145825_1_0_5"/>
<dbReference type="PhylomeDB" id="Q6N3N0"/>
<dbReference type="UniPathway" id="UPA00258">
    <property type="reaction ID" value="UER00370"/>
</dbReference>
<dbReference type="GO" id="GO:0005737">
    <property type="term" value="C:cytoplasm"/>
    <property type="evidence" value="ECO:0007669"/>
    <property type="project" value="UniProtKB-SubCell"/>
</dbReference>
<dbReference type="GO" id="GO:0016151">
    <property type="term" value="F:nickel cation binding"/>
    <property type="evidence" value="ECO:0007669"/>
    <property type="project" value="InterPro"/>
</dbReference>
<dbReference type="GO" id="GO:0009039">
    <property type="term" value="F:urease activity"/>
    <property type="evidence" value="ECO:0007669"/>
    <property type="project" value="UniProtKB-UniRule"/>
</dbReference>
<dbReference type="GO" id="GO:0043419">
    <property type="term" value="P:urea catabolic process"/>
    <property type="evidence" value="ECO:0007669"/>
    <property type="project" value="UniProtKB-UniRule"/>
</dbReference>
<dbReference type="CDD" id="cd00390">
    <property type="entry name" value="Urease_gamma"/>
    <property type="match status" value="1"/>
</dbReference>
<dbReference type="Gene3D" id="3.30.280.10">
    <property type="entry name" value="Urease, gamma-like subunit"/>
    <property type="match status" value="1"/>
</dbReference>
<dbReference type="HAMAP" id="MF_00739">
    <property type="entry name" value="Urease_gamma"/>
    <property type="match status" value="1"/>
</dbReference>
<dbReference type="InterPro" id="IPR012010">
    <property type="entry name" value="Urease_gamma"/>
</dbReference>
<dbReference type="InterPro" id="IPR002026">
    <property type="entry name" value="Urease_gamma/gamma-beta_su"/>
</dbReference>
<dbReference type="InterPro" id="IPR036463">
    <property type="entry name" value="Urease_gamma_sf"/>
</dbReference>
<dbReference type="InterPro" id="IPR050069">
    <property type="entry name" value="Urease_subunit"/>
</dbReference>
<dbReference type="NCBIfam" id="NF009712">
    <property type="entry name" value="PRK13241.1"/>
    <property type="match status" value="1"/>
</dbReference>
<dbReference type="NCBIfam" id="TIGR00193">
    <property type="entry name" value="urease_gam"/>
    <property type="match status" value="1"/>
</dbReference>
<dbReference type="PANTHER" id="PTHR33569">
    <property type="entry name" value="UREASE"/>
    <property type="match status" value="1"/>
</dbReference>
<dbReference type="PANTHER" id="PTHR33569:SF1">
    <property type="entry name" value="UREASE"/>
    <property type="match status" value="1"/>
</dbReference>
<dbReference type="Pfam" id="PF00547">
    <property type="entry name" value="Urease_gamma"/>
    <property type="match status" value="1"/>
</dbReference>
<dbReference type="PIRSF" id="PIRSF001223">
    <property type="entry name" value="Urease_gamma"/>
    <property type="match status" value="1"/>
</dbReference>
<dbReference type="SUPFAM" id="SSF54111">
    <property type="entry name" value="Urease, gamma-subunit"/>
    <property type="match status" value="1"/>
</dbReference>
<evidence type="ECO:0000255" key="1">
    <source>
        <dbReference type="HAMAP-Rule" id="MF_00739"/>
    </source>
</evidence>
<gene>
    <name evidence="1" type="primary">ureA</name>
    <name type="ordered locus">RPA3663</name>
</gene>
<sequence length="100" mass="11088">MNLSPREKDKLLVSMAAMVARRRLERGVKLNHPEAVALITDFIVEGARDGRSVAELMHAGAQVITRDQCMDGIAEMIHDIQVEATFPDGTKLVTVHQPIR</sequence>
<proteinExistence type="inferred from homology"/>
<keyword id="KW-0963">Cytoplasm</keyword>
<keyword id="KW-0378">Hydrolase</keyword>
<organism>
    <name type="scientific">Rhodopseudomonas palustris (strain ATCC BAA-98 / CGA009)</name>
    <dbReference type="NCBI Taxonomy" id="258594"/>
    <lineage>
        <taxon>Bacteria</taxon>
        <taxon>Pseudomonadati</taxon>
        <taxon>Pseudomonadota</taxon>
        <taxon>Alphaproteobacteria</taxon>
        <taxon>Hyphomicrobiales</taxon>
        <taxon>Nitrobacteraceae</taxon>
        <taxon>Rhodopseudomonas</taxon>
    </lineage>
</organism>